<comment type="function">
    <text evidence="1">Involved in the heme biosynthesis. Catalyzes the aerobic oxidative decarboxylation of propionate groups of rings A and B of coproporphyrinogen-III to yield the vinyl groups in protoporphyrinogen-IX.</text>
</comment>
<comment type="catalytic activity">
    <reaction evidence="1">
        <text>coproporphyrinogen III + O2 + 2 H(+) = protoporphyrinogen IX + 2 CO2 + 2 H2O</text>
        <dbReference type="Rhea" id="RHEA:18257"/>
        <dbReference type="ChEBI" id="CHEBI:15377"/>
        <dbReference type="ChEBI" id="CHEBI:15378"/>
        <dbReference type="ChEBI" id="CHEBI:15379"/>
        <dbReference type="ChEBI" id="CHEBI:16526"/>
        <dbReference type="ChEBI" id="CHEBI:57307"/>
        <dbReference type="ChEBI" id="CHEBI:57309"/>
        <dbReference type="EC" id="1.3.3.3"/>
    </reaction>
</comment>
<comment type="cofactor">
    <cofactor evidence="1">
        <name>a divalent metal cation</name>
        <dbReference type="ChEBI" id="CHEBI:60240"/>
    </cofactor>
</comment>
<comment type="pathway">
    <text evidence="1">Porphyrin-containing compound metabolism; protoporphyrin-IX biosynthesis; protoporphyrinogen-IX from coproporphyrinogen-III (O2 route): step 1/1.</text>
</comment>
<comment type="subunit">
    <text evidence="1">Homodimer.</text>
</comment>
<comment type="subcellular location">
    <subcellularLocation>
        <location evidence="1">Cytoplasm</location>
    </subcellularLocation>
</comment>
<comment type="similarity">
    <text evidence="1">Belongs to the aerobic coproporphyrinogen-III oxidase family.</text>
</comment>
<protein>
    <recommendedName>
        <fullName evidence="1">Oxygen-dependent coproporphyrinogen-III oxidase</fullName>
        <shortName evidence="1">CPO</shortName>
        <shortName evidence="1">Coprogen oxidase</shortName>
        <shortName evidence="1">Coproporphyrinogenase</shortName>
        <ecNumber evidence="1">1.3.3.3</ecNumber>
    </recommendedName>
</protein>
<evidence type="ECO:0000255" key="1">
    <source>
        <dbReference type="HAMAP-Rule" id="MF_00333"/>
    </source>
</evidence>
<sequence>MKPDAHHVKQFLLRLQDDICQTLSAVDGANFVEDSWRREAGGGGRSRVLRNGGIFEQAGVNFSHVHGDAMPASATAHRPELAGRSFEAMGVSLVVHPHNPYIPTSHANVRFFIAEKPGADPVWWFGGGFDLTPYYGFEEDAVHWHRTARDLCQPFGDDVYPRYKKWCDDYFFLKHRNEQRGIGGLFFDDLNTPDFDHCFDFMQAVGNGYTRAYLPIVERRKAMVWGERERNFQLYRRGRYVEFNLVWDRGTLFGLQTGGRTESILMSMPPLVRWEYDWQPEAGSPEAALSEFIQVRDWI</sequence>
<accession>A9N336</accession>
<name>HEM6_SALPB</name>
<feature type="chain" id="PRO_1000079261" description="Oxygen-dependent coproporphyrinogen-III oxidase">
    <location>
        <begin position="1"/>
        <end position="299"/>
    </location>
</feature>
<feature type="region of interest" description="Important for dimerization" evidence="1">
    <location>
        <begin position="240"/>
        <end position="275"/>
    </location>
</feature>
<feature type="active site" description="Proton donor" evidence="1">
    <location>
        <position position="106"/>
    </location>
</feature>
<feature type="binding site" evidence="1">
    <location>
        <position position="92"/>
    </location>
    <ligand>
        <name>substrate</name>
    </ligand>
</feature>
<feature type="binding site" evidence="1">
    <location>
        <position position="96"/>
    </location>
    <ligand>
        <name>a divalent metal cation</name>
        <dbReference type="ChEBI" id="CHEBI:60240"/>
    </ligand>
</feature>
<feature type="binding site" evidence="1">
    <location>
        <position position="106"/>
    </location>
    <ligand>
        <name>a divalent metal cation</name>
        <dbReference type="ChEBI" id="CHEBI:60240"/>
    </ligand>
</feature>
<feature type="binding site" evidence="1">
    <location>
        <begin position="108"/>
        <end position="110"/>
    </location>
    <ligand>
        <name>substrate</name>
    </ligand>
</feature>
<feature type="binding site" evidence="1">
    <location>
        <position position="145"/>
    </location>
    <ligand>
        <name>a divalent metal cation</name>
        <dbReference type="ChEBI" id="CHEBI:60240"/>
    </ligand>
</feature>
<feature type="binding site" evidence="1">
    <location>
        <position position="175"/>
    </location>
    <ligand>
        <name>a divalent metal cation</name>
        <dbReference type="ChEBI" id="CHEBI:60240"/>
    </ligand>
</feature>
<feature type="binding site" evidence="1">
    <location>
        <begin position="258"/>
        <end position="260"/>
    </location>
    <ligand>
        <name>substrate</name>
    </ligand>
</feature>
<feature type="site" description="Important for dimerization" evidence="1">
    <location>
        <position position="175"/>
    </location>
</feature>
<organism>
    <name type="scientific">Salmonella paratyphi B (strain ATCC BAA-1250 / SPB7)</name>
    <dbReference type="NCBI Taxonomy" id="1016998"/>
    <lineage>
        <taxon>Bacteria</taxon>
        <taxon>Pseudomonadati</taxon>
        <taxon>Pseudomonadota</taxon>
        <taxon>Gammaproteobacteria</taxon>
        <taxon>Enterobacterales</taxon>
        <taxon>Enterobacteriaceae</taxon>
        <taxon>Salmonella</taxon>
    </lineage>
</organism>
<dbReference type="EC" id="1.3.3.3" evidence="1"/>
<dbReference type="EMBL" id="CP000886">
    <property type="protein sequence ID" value="ABX65936.1"/>
    <property type="molecule type" value="Genomic_DNA"/>
</dbReference>
<dbReference type="RefSeq" id="WP_000801345.1">
    <property type="nucleotide sequence ID" value="NC_010102.1"/>
</dbReference>
<dbReference type="SMR" id="A9N336"/>
<dbReference type="KEGG" id="spq:SPAB_00503"/>
<dbReference type="PATRIC" id="fig|1016998.12.peg.477"/>
<dbReference type="HOGENOM" id="CLU_026169_0_1_6"/>
<dbReference type="BioCyc" id="SENT1016998:SPAB_RS02055-MONOMER"/>
<dbReference type="UniPathway" id="UPA00251">
    <property type="reaction ID" value="UER00322"/>
</dbReference>
<dbReference type="Proteomes" id="UP000008556">
    <property type="component" value="Chromosome"/>
</dbReference>
<dbReference type="GO" id="GO:0005737">
    <property type="term" value="C:cytoplasm"/>
    <property type="evidence" value="ECO:0007669"/>
    <property type="project" value="UniProtKB-SubCell"/>
</dbReference>
<dbReference type="GO" id="GO:0004109">
    <property type="term" value="F:coproporphyrinogen oxidase activity"/>
    <property type="evidence" value="ECO:0007669"/>
    <property type="project" value="UniProtKB-UniRule"/>
</dbReference>
<dbReference type="GO" id="GO:0046872">
    <property type="term" value="F:metal ion binding"/>
    <property type="evidence" value="ECO:0007669"/>
    <property type="project" value="UniProtKB-KW"/>
</dbReference>
<dbReference type="GO" id="GO:0042803">
    <property type="term" value="F:protein homodimerization activity"/>
    <property type="evidence" value="ECO:0000250"/>
    <property type="project" value="UniProtKB"/>
</dbReference>
<dbReference type="GO" id="GO:0006782">
    <property type="term" value="P:protoporphyrinogen IX biosynthetic process"/>
    <property type="evidence" value="ECO:0007669"/>
    <property type="project" value="UniProtKB-UniRule"/>
</dbReference>
<dbReference type="FunFam" id="3.40.1500.10:FF:000001">
    <property type="entry name" value="Oxygen-dependent coproporphyrinogen-III oxidase"/>
    <property type="match status" value="1"/>
</dbReference>
<dbReference type="Gene3D" id="3.40.1500.10">
    <property type="entry name" value="Coproporphyrinogen III oxidase, aerobic"/>
    <property type="match status" value="1"/>
</dbReference>
<dbReference type="HAMAP" id="MF_00333">
    <property type="entry name" value="Coprogen_oxidas"/>
    <property type="match status" value="1"/>
</dbReference>
<dbReference type="InterPro" id="IPR001260">
    <property type="entry name" value="Coprogen_oxidase_aer"/>
</dbReference>
<dbReference type="InterPro" id="IPR036406">
    <property type="entry name" value="Coprogen_oxidase_aer_sf"/>
</dbReference>
<dbReference type="InterPro" id="IPR018375">
    <property type="entry name" value="Coprogen_oxidase_CS"/>
</dbReference>
<dbReference type="NCBIfam" id="NF003727">
    <property type="entry name" value="PRK05330.1"/>
    <property type="match status" value="1"/>
</dbReference>
<dbReference type="PANTHER" id="PTHR10755">
    <property type="entry name" value="COPROPORPHYRINOGEN III OXIDASE, MITOCHONDRIAL"/>
    <property type="match status" value="1"/>
</dbReference>
<dbReference type="PANTHER" id="PTHR10755:SF0">
    <property type="entry name" value="OXYGEN-DEPENDENT COPROPORPHYRINOGEN-III OXIDASE, MITOCHONDRIAL"/>
    <property type="match status" value="1"/>
</dbReference>
<dbReference type="Pfam" id="PF01218">
    <property type="entry name" value="Coprogen_oxidas"/>
    <property type="match status" value="1"/>
</dbReference>
<dbReference type="PIRSF" id="PIRSF000166">
    <property type="entry name" value="Coproporphyri_ox"/>
    <property type="match status" value="1"/>
</dbReference>
<dbReference type="PRINTS" id="PR00073">
    <property type="entry name" value="COPRGNOXDASE"/>
</dbReference>
<dbReference type="SUPFAM" id="SSF102886">
    <property type="entry name" value="Coproporphyrinogen III oxidase"/>
    <property type="match status" value="1"/>
</dbReference>
<dbReference type="PROSITE" id="PS01021">
    <property type="entry name" value="COPROGEN_OXIDASE"/>
    <property type="match status" value="1"/>
</dbReference>
<keyword id="KW-0963">Cytoplasm</keyword>
<keyword id="KW-0350">Heme biosynthesis</keyword>
<keyword id="KW-0479">Metal-binding</keyword>
<keyword id="KW-0560">Oxidoreductase</keyword>
<keyword id="KW-0627">Porphyrin biosynthesis</keyword>
<gene>
    <name evidence="1" type="primary">hemF</name>
    <name type="ordered locus">SPAB_00503</name>
</gene>
<reference key="1">
    <citation type="submission" date="2007-11" db="EMBL/GenBank/DDBJ databases">
        <authorList>
            <consortium name="The Salmonella enterica serovar Paratyphi B Genome Sequencing Project"/>
            <person name="McClelland M."/>
            <person name="Sanderson E.K."/>
            <person name="Porwollik S."/>
            <person name="Spieth J."/>
            <person name="Clifton W.S."/>
            <person name="Fulton R."/>
            <person name="Cordes M."/>
            <person name="Wollam A."/>
            <person name="Shah N."/>
            <person name="Pepin K."/>
            <person name="Bhonagiri V."/>
            <person name="Nash W."/>
            <person name="Johnson M."/>
            <person name="Thiruvilangam P."/>
            <person name="Wilson R."/>
        </authorList>
    </citation>
    <scope>NUCLEOTIDE SEQUENCE [LARGE SCALE GENOMIC DNA]</scope>
    <source>
        <strain>ATCC BAA-1250 / SPB7</strain>
    </source>
</reference>
<proteinExistence type="inferred from homology"/>